<protein>
    <recommendedName>
        <fullName evidence="1">Transcriptional repressor NrdR</fullName>
    </recommendedName>
</protein>
<dbReference type="EMBL" id="CP000612">
    <property type="protein sequence ID" value="ABO49231.1"/>
    <property type="molecule type" value="Genomic_DNA"/>
</dbReference>
<dbReference type="RefSeq" id="WP_011877067.1">
    <property type="nucleotide sequence ID" value="NC_009253.1"/>
</dbReference>
<dbReference type="SMR" id="A4J2C8"/>
<dbReference type="STRING" id="349161.Dred_0692"/>
<dbReference type="KEGG" id="drm:Dred_0692"/>
<dbReference type="eggNOG" id="COG1327">
    <property type="taxonomic scope" value="Bacteria"/>
</dbReference>
<dbReference type="HOGENOM" id="CLU_108412_0_0_9"/>
<dbReference type="OrthoDB" id="9807461at2"/>
<dbReference type="Proteomes" id="UP000001556">
    <property type="component" value="Chromosome"/>
</dbReference>
<dbReference type="GO" id="GO:0005524">
    <property type="term" value="F:ATP binding"/>
    <property type="evidence" value="ECO:0007669"/>
    <property type="project" value="UniProtKB-KW"/>
</dbReference>
<dbReference type="GO" id="GO:0003677">
    <property type="term" value="F:DNA binding"/>
    <property type="evidence" value="ECO:0007669"/>
    <property type="project" value="UniProtKB-KW"/>
</dbReference>
<dbReference type="GO" id="GO:0008270">
    <property type="term" value="F:zinc ion binding"/>
    <property type="evidence" value="ECO:0007669"/>
    <property type="project" value="UniProtKB-UniRule"/>
</dbReference>
<dbReference type="GO" id="GO:0045892">
    <property type="term" value="P:negative regulation of DNA-templated transcription"/>
    <property type="evidence" value="ECO:0007669"/>
    <property type="project" value="UniProtKB-UniRule"/>
</dbReference>
<dbReference type="HAMAP" id="MF_00440">
    <property type="entry name" value="NrdR"/>
    <property type="match status" value="1"/>
</dbReference>
<dbReference type="InterPro" id="IPR005144">
    <property type="entry name" value="ATP-cone_dom"/>
</dbReference>
<dbReference type="InterPro" id="IPR055173">
    <property type="entry name" value="NrdR-like_N"/>
</dbReference>
<dbReference type="InterPro" id="IPR003796">
    <property type="entry name" value="RNR_NrdR-like"/>
</dbReference>
<dbReference type="NCBIfam" id="TIGR00244">
    <property type="entry name" value="transcriptional regulator NrdR"/>
    <property type="match status" value="1"/>
</dbReference>
<dbReference type="PANTHER" id="PTHR30455">
    <property type="entry name" value="TRANSCRIPTIONAL REPRESSOR NRDR"/>
    <property type="match status" value="1"/>
</dbReference>
<dbReference type="PANTHER" id="PTHR30455:SF2">
    <property type="entry name" value="TRANSCRIPTIONAL REPRESSOR NRDR"/>
    <property type="match status" value="1"/>
</dbReference>
<dbReference type="Pfam" id="PF03477">
    <property type="entry name" value="ATP-cone"/>
    <property type="match status" value="1"/>
</dbReference>
<dbReference type="Pfam" id="PF22811">
    <property type="entry name" value="Zn_ribbon_NrdR"/>
    <property type="match status" value="1"/>
</dbReference>
<dbReference type="PROSITE" id="PS51161">
    <property type="entry name" value="ATP_CONE"/>
    <property type="match status" value="1"/>
</dbReference>
<organism>
    <name type="scientific">Desulforamulus reducens (strain ATCC BAA-1160 / DSM 100696 / MI-1)</name>
    <name type="common">Desulfotomaculum reducens</name>
    <dbReference type="NCBI Taxonomy" id="349161"/>
    <lineage>
        <taxon>Bacteria</taxon>
        <taxon>Bacillati</taxon>
        <taxon>Bacillota</taxon>
        <taxon>Clostridia</taxon>
        <taxon>Eubacteriales</taxon>
        <taxon>Peptococcaceae</taxon>
        <taxon>Desulforamulus</taxon>
    </lineage>
</organism>
<feature type="chain" id="PRO_1000080743" description="Transcriptional repressor NrdR">
    <location>
        <begin position="1"/>
        <end position="158"/>
    </location>
</feature>
<feature type="domain" description="ATP-cone" evidence="1">
    <location>
        <begin position="49"/>
        <end position="139"/>
    </location>
</feature>
<feature type="zinc finger region" evidence="1">
    <location>
        <begin position="3"/>
        <end position="34"/>
    </location>
</feature>
<keyword id="KW-0067">ATP-binding</keyword>
<keyword id="KW-0238">DNA-binding</keyword>
<keyword id="KW-0479">Metal-binding</keyword>
<keyword id="KW-0547">Nucleotide-binding</keyword>
<keyword id="KW-1185">Reference proteome</keyword>
<keyword id="KW-0678">Repressor</keyword>
<keyword id="KW-0804">Transcription</keyword>
<keyword id="KW-0805">Transcription regulation</keyword>
<keyword id="KW-0862">Zinc</keyword>
<keyword id="KW-0863">Zinc-finger</keyword>
<name>NRDR_DESRM</name>
<comment type="function">
    <text evidence="1">Negatively regulates transcription of bacterial ribonucleotide reductase nrd genes and operons by binding to NrdR-boxes.</text>
</comment>
<comment type="cofactor">
    <cofactor evidence="1">
        <name>Zn(2+)</name>
        <dbReference type="ChEBI" id="CHEBI:29105"/>
    </cofactor>
    <text evidence="1">Binds 1 zinc ion.</text>
</comment>
<comment type="similarity">
    <text evidence="1">Belongs to the NrdR family.</text>
</comment>
<evidence type="ECO:0000255" key="1">
    <source>
        <dbReference type="HAMAP-Rule" id="MF_00440"/>
    </source>
</evidence>
<sequence>MLCPFCSFPESRVLDSRPADEGNSIRRRRECGECGKRFTTYERVDERPLVVVKKDGRREVFDRAKLLAGFMKACEKRPVPVQRIEDTVHSIERELRSHGELEVLSQAVGELVMNSLLELDEVAYIRFASVYRQFGDIYSFLHEVEKLLKSKEDKKGAL</sequence>
<proteinExistence type="inferred from homology"/>
<reference key="1">
    <citation type="submission" date="2007-03" db="EMBL/GenBank/DDBJ databases">
        <title>Complete sequence of Desulfotomaculum reducens MI-1.</title>
        <authorList>
            <consortium name="US DOE Joint Genome Institute"/>
            <person name="Copeland A."/>
            <person name="Lucas S."/>
            <person name="Lapidus A."/>
            <person name="Barry K."/>
            <person name="Detter J.C."/>
            <person name="Glavina del Rio T."/>
            <person name="Hammon N."/>
            <person name="Israni S."/>
            <person name="Dalin E."/>
            <person name="Tice H."/>
            <person name="Pitluck S."/>
            <person name="Sims D."/>
            <person name="Brettin T."/>
            <person name="Bruce D."/>
            <person name="Han C."/>
            <person name="Tapia R."/>
            <person name="Schmutz J."/>
            <person name="Larimer F."/>
            <person name="Land M."/>
            <person name="Hauser L."/>
            <person name="Kyrpides N."/>
            <person name="Kim E."/>
            <person name="Tebo B.M."/>
            <person name="Richardson P."/>
        </authorList>
    </citation>
    <scope>NUCLEOTIDE SEQUENCE [LARGE SCALE GENOMIC DNA]</scope>
    <source>
        <strain>ATCC BAA-1160 / DSM 100696 / MI-1</strain>
    </source>
</reference>
<gene>
    <name evidence="1" type="primary">nrdR</name>
    <name type="ordered locus">Dred_0692</name>
</gene>
<accession>A4J2C8</accession>